<comment type="function">
    <text evidence="1">Proton pump that utilizes the energy of pyrophosphate hydrolysis as the driving force for proton movement across the membrane. Generates a proton motive force (By similarity).</text>
</comment>
<comment type="catalytic activity">
    <reaction>
        <text>diphosphate + H2O + H(+)(in) = 2 phosphate + 2 H(+)(out)</text>
        <dbReference type="Rhea" id="RHEA:13973"/>
        <dbReference type="ChEBI" id="CHEBI:15377"/>
        <dbReference type="ChEBI" id="CHEBI:15378"/>
        <dbReference type="ChEBI" id="CHEBI:33019"/>
        <dbReference type="ChEBI" id="CHEBI:43474"/>
        <dbReference type="EC" id="7.1.3.1"/>
    </reaction>
</comment>
<comment type="cofactor">
    <cofactor evidence="1">
        <name>Mg(2+)</name>
        <dbReference type="ChEBI" id="CHEBI:18420"/>
    </cofactor>
</comment>
<comment type="subunit">
    <text evidence="1">Homodimer.</text>
</comment>
<comment type="subcellular location">
    <subcellularLocation>
        <location evidence="1">Cell inner membrane</location>
        <topology evidence="1">Multi-pass membrane protein</topology>
    </subcellularLocation>
</comment>
<comment type="similarity">
    <text evidence="3">Belongs to the H(+)-translocating pyrophosphatase (TC 3.A.10) family.</text>
</comment>
<sequence>GSAGLGALVLFAAYANDLSYFAANGDTYPYFKDIGEISFSLANPYVVAGLLFGGLIPYLFGGIAMTAVGKAASAIVEEVRRQFREKPGIMAGTEKPDYGRAVDLLTKAAIREMVIPSLLPVLAPLVVYFGVLLISGSKAFAFAALGAYLLAVIMNRVLVAICMTLVGSS</sequence>
<proteinExistence type="inferred from homology"/>
<gene>
    <name type="primary">hppA1</name>
</gene>
<dbReference type="EC" id="7.1.3.1"/>
<dbReference type="EMBL" id="AH011148">
    <property type="protein sequence ID" value="AAL14976.1"/>
    <property type="molecule type" value="Genomic_DNA"/>
</dbReference>
<dbReference type="SMR" id="Q93AS0"/>
<dbReference type="GO" id="GO:0005886">
    <property type="term" value="C:plasma membrane"/>
    <property type="evidence" value="ECO:0007669"/>
    <property type="project" value="UniProtKB-SubCell"/>
</dbReference>
<dbReference type="GO" id="GO:0009678">
    <property type="term" value="F:diphosphate hydrolysis-driven proton transmembrane transporter activity"/>
    <property type="evidence" value="ECO:0007669"/>
    <property type="project" value="UniProtKB-EC"/>
</dbReference>
<dbReference type="GO" id="GO:0004427">
    <property type="term" value="F:inorganic diphosphate phosphatase activity"/>
    <property type="evidence" value="ECO:0007669"/>
    <property type="project" value="InterPro"/>
</dbReference>
<dbReference type="InterPro" id="IPR004131">
    <property type="entry name" value="PPase-energised_H-pump"/>
</dbReference>
<dbReference type="PANTHER" id="PTHR31998">
    <property type="entry name" value="K(+)-INSENSITIVE PYROPHOSPHATE-ENERGIZED PROTON PUMP"/>
    <property type="match status" value="1"/>
</dbReference>
<dbReference type="Pfam" id="PF03030">
    <property type="entry name" value="H_PPase"/>
    <property type="match status" value="1"/>
</dbReference>
<reference key="1">
    <citation type="submission" date="2001-09" db="EMBL/GenBank/DDBJ databases">
        <title>High prevalence of the H+-proton-pumping inorganic pyrophosphatase gene in alpha proteobacteria and evidence of lateral transfer in its phylogeny.</title>
        <authorList>
            <person name="Jumas-Bilak E."/>
            <person name="Michaux-Charachon S."/>
            <person name="Teyssier C."/>
        </authorList>
    </citation>
    <scope>NUCLEOTIDE SEQUENCE [GENOMIC DNA]</scope>
    <source>
        <strain>ATCC 14480 / 3D1k22a</strain>
    </source>
</reference>
<feature type="chain" id="PRO_0000217025" description="Pyrophosphate-energized proton pump 1">
    <location>
        <begin position="1" status="less than"/>
        <end position="169" status="greater than"/>
    </location>
</feature>
<feature type="transmembrane region" description="Helical" evidence="2">
    <location>
        <begin position="45"/>
        <end position="65"/>
    </location>
</feature>
<feature type="transmembrane region" description="Helical" evidence="2">
    <location>
        <begin position="114"/>
        <end position="134"/>
    </location>
</feature>
<feature type="transmembrane region" description="Helical" evidence="2">
    <location>
        <begin position="141"/>
        <end position="161"/>
    </location>
</feature>
<feature type="non-terminal residue">
    <location>
        <position position="1"/>
    </location>
</feature>
<feature type="non-terminal residue">
    <location>
        <position position="169"/>
    </location>
</feature>
<organism>
    <name type="scientific">Rhizobium leguminosarum bv. trifolii</name>
    <dbReference type="NCBI Taxonomy" id="386"/>
    <lineage>
        <taxon>Bacteria</taxon>
        <taxon>Pseudomonadati</taxon>
        <taxon>Pseudomonadota</taxon>
        <taxon>Alphaproteobacteria</taxon>
        <taxon>Hyphomicrobiales</taxon>
        <taxon>Rhizobiaceae</taxon>
        <taxon>Rhizobium/Agrobacterium group</taxon>
        <taxon>Rhizobium</taxon>
    </lineage>
</organism>
<keyword id="KW-0997">Cell inner membrane</keyword>
<keyword id="KW-1003">Cell membrane</keyword>
<keyword id="KW-0375">Hydrogen ion transport</keyword>
<keyword id="KW-0406">Ion transport</keyword>
<keyword id="KW-0460">Magnesium</keyword>
<keyword id="KW-0472">Membrane</keyword>
<keyword id="KW-1278">Translocase</keyword>
<keyword id="KW-0812">Transmembrane</keyword>
<keyword id="KW-1133">Transmembrane helix</keyword>
<keyword id="KW-0813">Transport</keyword>
<accession>Q93AS0</accession>
<protein>
    <recommendedName>
        <fullName>Pyrophosphate-energized proton pump 1</fullName>
        <ecNumber>7.1.3.1</ecNumber>
    </recommendedName>
    <alternativeName>
        <fullName>Membrane-bound proton-translocating pyrophosphatase 1</fullName>
    </alternativeName>
    <alternativeName>
        <fullName>Pyrophosphate-energized inorganic pyrophosphatase 1</fullName>
        <shortName>H(+)-PPase 1</shortName>
    </alternativeName>
</protein>
<name>HPPA1_RHILT</name>
<evidence type="ECO:0000250" key="1"/>
<evidence type="ECO:0000255" key="2"/>
<evidence type="ECO:0000305" key="3"/>